<feature type="chain" id="PRO_0000435515" description="D-erythrulose kinase">
    <location>
        <begin position="1"/>
        <end position="580"/>
    </location>
</feature>
<feature type="domain" description="DhaK" evidence="4">
    <location>
        <begin position="7"/>
        <end position="327"/>
    </location>
</feature>
<feature type="domain" description="DhaL" evidence="3">
    <location>
        <begin position="368"/>
        <end position="570"/>
    </location>
</feature>
<feature type="region of interest" description="Disordered" evidence="5">
    <location>
        <begin position="329"/>
        <end position="360"/>
    </location>
</feature>
<feature type="active site" description="Tele-hemiaminal-histidine intermediate" evidence="2">
    <location>
        <position position="217"/>
    </location>
</feature>
<feature type="binding site" evidence="1">
    <location>
        <begin position="397"/>
        <end position="403"/>
    </location>
    <ligand>
        <name>ATP</name>
        <dbReference type="ChEBI" id="CHEBI:30616"/>
    </ligand>
</feature>
<feature type="binding site" evidence="1">
    <location>
        <begin position="443"/>
        <end position="444"/>
    </location>
    <ligand>
        <name>ATP</name>
        <dbReference type="ChEBI" id="CHEBI:30616"/>
    </ligand>
</feature>
<feature type="binding site" evidence="1">
    <location>
        <position position="485"/>
    </location>
    <ligand>
        <name>ATP</name>
        <dbReference type="ChEBI" id="CHEBI:30616"/>
    </ligand>
</feature>
<feature type="binding site" evidence="1">
    <location>
        <position position="542"/>
    </location>
    <ligand>
        <name>ATP</name>
        <dbReference type="ChEBI" id="CHEBI:30616"/>
    </ligand>
</feature>
<feature type="binding site" evidence="1">
    <location>
        <begin position="555"/>
        <end position="557"/>
    </location>
    <ligand>
        <name>ATP</name>
        <dbReference type="ChEBI" id="CHEBI:30616"/>
    </ligand>
</feature>
<proteinExistence type="evidence at protein level"/>
<reference key="1">
    <citation type="submission" date="2006-10" db="EMBL/GenBank/DDBJ databases">
        <authorList>
            <person name="Fleischmann R.D."/>
            <person name="Dodson R.J."/>
            <person name="Haft D.H."/>
            <person name="Merkel J.S."/>
            <person name="Nelson W.C."/>
            <person name="Fraser C.M."/>
        </authorList>
    </citation>
    <scope>NUCLEOTIDE SEQUENCE [LARGE SCALE GENOMIC DNA]</scope>
    <source>
        <strain>ATCC 700084 / mc(2)155</strain>
    </source>
</reference>
<reference key="2">
    <citation type="journal article" date="2007" name="Genome Biol.">
        <title>Interrupted coding sequences in Mycobacterium smegmatis: authentic mutations or sequencing errors?</title>
        <authorList>
            <person name="Deshayes C."/>
            <person name="Perrodou E."/>
            <person name="Gallien S."/>
            <person name="Euphrasie D."/>
            <person name="Schaeffer C."/>
            <person name="Van-Dorsselaer A."/>
            <person name="Poch O."/>
            <person name="Lecompte O."/>
            <person name="Reyrat J.-M."/>
        </authorList>
    </citation>
    <scope>NUCLEOTIDE SEQUENCE [LARGE SCALE GENOMIC DNA]</scope>
    <source>
        <strain>ATCC 700084 / mc(2)155</strain>
    </source>
</reference>
<reference key="3">
    <citation type="journal article" date="2009" name="Genome Res.">
        <title>Ortho-proteogenomics: multiple proteomes investigation through orthology and a new MS-based protocol.</title>
        <authorList>
            <person name="Gallien S."/>
            <person name="Perrodou E."/>
            <person name="Carapito C."/>
            <person name="Deshayes C."/>
            <person name="Reyrat J.-M."/>
            <person name="Van Dorsselaer A."/>
            <person name="Poch O."/>
            <person name="Schaeffer C."/>
            <person name="Lecompte O."/>
        </authorList>
    </citation>
    <scope>NUCLEOTIDE SEQUENCE [LARGE SCALE GENOMIC DNA]</scope>
    <source>
        <strain>ATCC 700084 / mc(2)155</strain>
    </source>
</reference>
<reference key="4">
    <citation type="journal article" date="2015" name="J. Am. Chem. Soc.">
        <title>A general strategy for the discovery of metabolic pathways: D-threitol, L-threitol, and erythritol utilization in Mycobacterium smegmatis.</title>
        <authorList>
            <person name="Huang H."/>
            <person name="Carter M.S."/>
            <person name="Vetting M.W."/>
            <person name="Al-Obaidi N."/>
            <person name="Patskovsky Y."/>
            <person name="Almo S.C."/>
            <person name="Gerlt J.A."/>
        </authorList>
    </citation>
    <scope>FUNCTION</scope>
    <scope>CATALYTIC ACTIVITY</scope>
    <scope>SUBSTRATE SPECIFICITY</scope>
    <scope>BIOPHYSICOCHEMICAL PROPERTIES</scope>
    <scope>INDUCTION</scope>
    <scope>DISRUPTION PHENOTYPE</scope>
    <scope>PATHWAY</scope>
    <source>
        <strain>ATCC 700084 / mc(2)155</strain>
    </source>
</reference>
<protein>
    <recommendedName>
        <fullName evidence="7">D-erythrulose kinase</fullName>
        <ecNumber evidence="6">2.7.1.210</ecNumber>
    </recommendedName>
</protein>
<organism>
    <name type="scientific">Mycolicibacterium smegmatis (strain ATCC 700084 / mc(2)155)</name>
    <name type="common">Mycobacterium smegmatis</name>
    <dbReference type="NCBI Taxonomy" id="246196"/>
    <lineage>
        <taxon>Bacteria</taxon>
        <taxon>Bacillati</taxon>
        <taxon>Actinomycetota</taxon>
        <taxon>Actinomycetes</taxon>
        <taxon>Mycobacteriales</taxon>
        <taxon>Mycobacteriaceae</taxon>
        <taxon>Mycolicibacterium</taxon>
    </lineage>
</organism>
<comment type="function">
    <text evidence="6">Catalyzes the phosphorylation of D-erythrulose to D-erythrulose-4P. Involved in the degradation pathways of erythritol and D-threitol, that allow M.smegmatis to grow on these compounds as the sole carbon source.</text>
</comment>
<comment type="catalytic activity">
    <reaction evidence="6">
        <text>D-erythrulose + ATP = D-erythrulose 4-phosphate + ADP + H(+)</text>
        <dbReference type="Rhea" id="RHEA:48768"/>
        <dbReference type="ChEBI" id="CHEBI:15378"/>
        <dbReference type="ChEBI" id="CHEBI:16023"/>
        <dbReference type="ChEBI" id="CHEBI:30616"/>
        <dbReference type="ChEBI" id="CHEBI:90796"/>
        <dbReference type="ChEBI" id="CHEBI:456216"/>
        <dbReference type="EC" id="2.7.1.210"/>
    </reaction>
</comment>
<comment type="biophysicochemical properties">
    <kinetics>
        <KM evidence="6">4.6 uM for D-erythrulose</KM>
        <KM evidence="6">396 uM for L-erythrulose</KM>
        <KM evidence="6">339 uM for dihydroxyacetone</KM>
        <text evidence="6">kcat is 2.88 sec(-1) with D-erythrulose as substrate. kcat is 0.091 sec(-1) with L-erythrulose as substrate. kcat is 0.063 sec(-1) with dihydroxyacetone as substrate.</text>
    </kinetics>
</comment>
<comment type="pathway">
    <text evidence="6">Carbohydrate metabolism; erythritol degradation.</text>
</comment>
<comment type="pathway">
    <text evidence="6">Carbohydrate metabolism; D-threitol degradation.</text>
</comment>
<comment type="induction">
    <text evidence="6">Up-regulated during growth on erythritol, D-threitol or L-threitol relative to growth on glycerol.</text>
</comment>
<comment type="disruption phenotype">
    <text evidence="6">Cells lacking this gene are defective for growth with D-threitol and are totally unable to grow on erythritol.</text>
</comment>
<sequence length="580" mass="59699">MTKLFNDPARFTEDMLVGFLDANSRYVVGVPGGVVRAQTTRPGKVAVVIGGGSGHYPAFCGTVGPGFADGAVVGNIFTSPSAEEAASVARAAHSDAGVLLTTGNYAGDVMNFNLAVDQLRSEGIEAQYFAVTDDVASAERGQEAKRRGIAGDFTVFKCASAAAEEGLDLAGVVRVAEAANAATRTLGVAFDGCTLPGADHPLFTVPEGHMGLGLGIHGEPGVSEEKMPTAAGLAATLVDGVLGDRPDAPEKRIAVILNGLGRTKYEELFVVWGEVSRLLRDRGYTIVEPEVGELVTSLDMAGCSLTVMWLDEELERYWAAPADTPAYKKGAAQQHVSGERRSEATARSASSGPKLAELSDEDGRAGARLVARAFDAMAEALADAEEELGRIDAVAGDGDHGRGMVKGSSAAREAAASALSEGAGQGSVLNAAGKAWAAKAGGTSGVLWGALLTALGARLGDTGRPDSSVIAAGVRDAYDALIRLGGAAPGDKTMLDAMLPFTEELERRVAQDESWQSAWRAAADVATEAARATADLRPKIGRARPLAERSVGTPDAGATSLALCARTVADCVTLSTQGEN</sequence>
<keyword id="KW-0067">ATP-binding</keyword>
<keyword id="KW-0119">Carbohydrate metabolism</keyword>
<keyword id="KW-0418">Kinase</keyword>
<keyword id="KW-0547">Nucleotide-binding</keyword>
<keyword id="KW-1185">Reference proteome</keyword>
<keyword id="KW-0808">Transferase</keyword>
<name>DERK_MYCS2</name>
<gene>
    <name evidence="7" type="primary">derK</name>
    <name evidence="8" type="ordered locus">MSMEG_3271</name>
    <name evidence="9" type="ordered locus">MSMEI_3187</name>
</gene>
<dbReference type="EC" id="2.7.1.210" evidence="6"/>
<dbReference type="EMBL" id="CP000480">
    <property type="protein sequence ID" value="ABK70898.1"/>
    <property type="molecule type" value="Genomic_DNA"/>
</dbReference>
<dbReference type="EMBL" id="CP001663">
    <property type="protein sequence ID" value="AFP39650.1"/>
    <property type="molecule type" value="Genomic_DNA"/>
</dbReference>
<dbReference type="RefSeq" id="WP_011728941.1">
    <property type="nucleotide sequence ID" value="NZ_SIJM01000015.1"/>
</dbReference>
<dbReference type="RefSeq" id="YP_887582.1">
    <property type="nucleotide sequence ID" value="NC_008596.1"/>
</dbReference>
<dbReference type="SMR" id="A0QXE4"/>
<dbReference type="STRING" id="246196.MSMEG_3271"/>
<dbReference type="PaxDb" id="246196-MSMEI_3187"/>
<dbReference type="GeneID" id="93458040"/>
<dbReference type="KEGG" id="msb:LJ00_16260"/>
<dbReference type="KEGG" id="msg:MSMEI_3187"/>
<dbReference type="KEGG" id="msm:MSMEG_3271"/>
<dbReference type="PATRIC" id="fig|246196.19.peg.3232"/>
<dbReference type="eggNOG" id="COG2376">
    <property type="taxonomic scope" value="Bacteria"/>
</dbReference>
<dbReference type="OrthoDB" id="9806345at2"/>
<dbReference type="BioCyc" id="MetaCyc:MONOMER-19890"/>
<dbReference type="BRENDA" id="2.7.1.210">
    <property type="organism ID" value="3512"/>
</dbReference>
<dbReference type="UniPathway" id="UPA01065"/>
<dbReference type="UniPathway" id="UPA01066"/>
<dbReference type="Proteomes" id="UP000000757">
    <property type="component" value="Chromosome"/>
</dbReference>
<dbReference type="Proteomes" id="UP000006158">
    <property type="component" value="Chromosome"/>
</dbReference>
<dbReference type="GO" id="GO:0005829">
    <property type="term" value="C:cytosol"/>
    <property type="evidence" value="ECO:0007669"/>
    <property type="project" value="TreeGrafter"/>
</dbReference>
<dbReference type="GO" id="GO:0005524">
    <property type="term" value="F:ATP binding"/>
    <property type="evidence" value="ECO:0007669"/>
    <property type="project" value="UniProtKB-KW"/>
</dbReference>
<dbReference type="GO" id="GO:0030246">
    <property type="term" value="F:carbohydrate binding"/>
    <property type="evidence" value="ECO:0000314"/>
    <property type="project" value="UniProtKB"/>
</dbReference>
<dbReference type="GO" id="GO:0019200">
    <property type="term" value="F:carbohydrate kinase activity"/>
    <property type="evidence" value="ECO:0000314"/>
    <property type="project" value="UniProtKB"/>
</dbReference>
<dbReference type="GO" id="GO:0004371">
    <property type="term" value="F:glycerone kinase activity"/>
    <property type="evidence" value="ECO:0007669"/>
    <property type="project" value="InterPro"/>
</dbReference>
<dbReference type="GO" id="GO:0016052">
    <property type="term" value="P:carbohydrate catabolic process"/>
    <property type="evidence" value="ECO:0000315"/>
    <property type="project" value="UniProtKB"/>
</dbReference>
<dbReference type="GO" id="GO:0009758">
    <property type="term" value="P:carbohydrate utilization"/>
    <property type="evidence" value="ECO:0000315"/>
    <property type="project" value="UniProtKB"/>
</dbReference>
<dbReference type="GO" id="GO:0071322">
    <property type="term" value="P:cellular response to carbohydrate stimulus"/>
    <property type="evidence" value="ECO:0000314"/>
    <property type="project" value="UniProtKB"/>
</dbReference>
<dbReference type="GO" id="GO:0019563">
    <property type="term" value="P:glycerol catabolic process"/>
    <property type="evidence" value="ECO:0007669"/>
    <property type="project" value="TreeGrafter"/>
</dbReference>
<dbReference type="FunFam" id="3.30.1180.20:FF:000001">
    <property type="entry name" value="Dihydroxyacetone kinase 1"/>
    <property type="match status" value="1"/>
</dbReference>
<dbReference type="FunFam" id="1.25.40.340:FF:000002">
    <property type="entry name" value="Dihydroxyacetone kinase, L subunit"/>
    <property type="match status" value="1"/>
</dbReference>
<dbReference type="FunFam" id="3.40.50.10440:FF:000003">
    <property type="entry name" value="Homodimeric dihydroxyacetone kinase"/>
    <property type="match status" value="1"/>
</dbReference>
<dbReference type="Gene3D" id="1.25.40.340">
    <property type="match status" value="1"/>
</dbReference>
<dbReference type="Gene3D" id="3.40.50.10440">
    <property type="entry name" value="Dihydroxyacetone kinase, domain 1"/>
    <property type="match status" value="1"/>
</dbReference>
<dbReference type="Gene3D" id="3.30.1180.20">
    <property type="entry name" value="Dihydroxyacetone kinase, domain 2"/>
    <property type="match status" value="1"/>
</dbReference>
<dbReference type="InterPro" id="IPR004006">
    <property type="entry name" value="DhaK_dom"/>
</dbReference>
<dbReference type="InterPro" id="IPR004007">
    <property type="entry name" value="DhaL_dom"/>
</dbReference>
<dbReference type="InterPro" id="IPR036117">
    <property type="entry name" value="DhaL_dom_sf"/>
</dbReference>
<dbReference type="InterPro" id="IPR050861">
    <property type="entry name" value="Dihydroxyacetone_Kinase"/>
</dbReference>
<dbReference type="NCBIfam" id="NF011049">
    <property type="entry name" value="PRK14479.1"/>
    <property type="match status" value="1"/>
</dbReference>
<dbReference type="PANTHER" id="PTHR28629">
    <property type="entry name" value="TRIOKINASE/FMN CYCLASE"/>
    <property type="match status" value="1"/>
</dbReference>
<dbReference type="PANTHER" id="PTHR28629:SF4">
    <property type="entry name" value="TRIOKINASE_FMN CYCLASE"/>
    <property type="match status" value="1"/>
</dbReference>
<dbReference type="Pfam" id="PF02733">
    <property type="entry name" value="Dak1"/>
    <property type="match status" value="1"/>
</dbReference>
<dbReference type="Pfam" id="PF02734">
    <property type="entry name" value="Dak2"/>
    <property type="match status" value="1"/>
</dbReference>
<dbReference type="SMART" id="SM01120">
    <property type="entry name" value="Dak2"/>
    <property type="match status" value="1"/>
</dbReference>
<dbReference type="SUPFAM" id="SSF82549">
    <property type="entry name" value="DAK1/DegV-like"/>
    <property type="match status" value="1"/>
</dbReference>
<dbReference type="SUPFAM" id="SSF101473">
    <property type="entry name" value="DhaL-like"/>
    <property type="match status" value="1"/>
</dbReference>
<dbReference type="PROSITE" id="PS51481">
    <property type="entry name" value="DHAK"/>
    <property type="match status" value="1"/>
</dbReference>
<dbReference type="PROSITE" id="PS51480">
    <property type="entry name" value="DHAL"/>
    <property type="match status" value="1"/>
</dbReference>
<evidence type="ECO:0000250" key="1">
    <source>
        <dbReference type="UniProtKB" id="P76014"/>
    </source>
</evidence>
<evidence type="ECO:0000250" key="2">
    <source>
        <dbReference type="UniProtKB" id="P76015"/>
    </source>
</evidence>
<evidence type="ECO:0000255" key="3">
    <source>
        <dbReference type="PROSITE-ProRule" id="PRU00813"/>
    </source>
</evidence>
<evidence type="ECO:0000255" key="4">
    <source>
        <dbReference type="PROSITE-ProRule" id="PRU00814"/>
    </source>
</evidence>
<evidence type="ECO:0000256" key="5">
    <source>
        <dbReference type="SAM" id="MobiDB-lite"/>
    </source>
</evidence>
<evidence type="ECO:0000269" key="6">
    <source>
    </source>
</evidence>
<evidence type="ECO:0000303" key="7">
    <source>
    </source>
</evidence>
<evidence type="ECO:0000312" key="8">
    <source>
        <dbReference type="EMBL" id="ABK70898.1"/>
    </source>
</evidence>
<evidence type="ECO:0000312" key="9">
    <source>
        <dbReference type="EMBL" id="AFP39650.1"/>
    </source>
</evidence>
<accession>A0QXE4</accession>